<sequence length="291" mass="31344">MAPSNLPPVFNATSQDIEMLLAAQCHLGSKNLQVHMEPYLWKTRPDGINVINIGKTWEKIVLAARIIAAIDNPADICVISARPYGQRAVLKFAAHTGAVAIAGRFTPGSFTNYITRSFKEPRLIIVTDPRTDSQAIKEASYVNIPVIALCDTDSPTEFVDVAIPTNNKGRHAIGLVWWLLAREVLRLRGTLANRETEWDVVVDLYFYRDPEAEEAKELEEAKAPGVEEIGAAAVETGFGAEGWEAAGGSAFAAAASTTAPPNWEATGGDWATSTAPAEGWAGDAPAGETKW</sequence>
<protein>
    <recommendedName>
        <fullName evidence="1">Small ribosomal subunit protein uS2</fullName>
    </recommendedName>
    <alternativeName>
        <fullName evidence="3">40S ribosomal protein S0</fullName>
    </alternativeName>
</protein>
<proteinExistence type="inferred from homology"/>
<name>RSSA_COCIM</name>
<keyword id="KW-0963">Cytoplasm</keyword>
<keyword id="KW-1185">Reference proteome</keyword>
<keyword id="KW-0687">Ribonucleoprotein</keyword>
<keyword id="KW-0689">Ribosomal protein</keyword>
<accession>Q1E1R2</accession>
<accession>J3KBT3</accession>
<evidence type="ECO:0000255" key="1">
    <source>
        <dbReference type="HAMAP-Rule" id="MF_03015"/>
    </source>
</evidence>
<evidence type="ECO:0000256" key="2">
    <source>
        <dbReference type="SAM" id="MobiDB-lite"/>
    </source>
</evidence>
<evidence type="ECO:0000305" key="3"/>
<dbReference type="EMBL" id="GG704916">
    <property type="protein sequence ID" value="EAS32477.3"/>
    <property type="molecule type" value="Genomic_DNA"/>
</dbReference>
<dbReference type="RefSeq" id="XP_001244060.1">
    <property type="nucleotide sequence ID" value="XM_001244059.2"/>
</dbReference>
<dbReference type="SMR" id="Q1E1R2"/>
<dbReference type="FunCoup" id="Q1E1R2">
    <property type="interactions" value="1208"/>
</dbReference>
<dbReference type="STRING" id="246410.Q1E1R2"/>
<dbReference type="GeneID" id="4564449"/>
<dbReference type="KEGG" id="cim:CIMG_03501"/>
<dbReference type="VEuPathDB" id="FungiDB:CIMG_03501"/>
<dbReference type="InParanoid" id="Q1E1R2"/>
<dbReference type="OMA" id="QCHLGAK"/>
<dbReference type="OrthoDB" id="414863at2759"/>
<dbReference type="Proteomes" id="UP000001261">
    <property type="component" value="Unassembled WGS sequence"/>
</dbReference>
<dbReference type="GO" id="GO:0022627">
    <property type="term" value="C:cytosolic small ribosomal subunit"/>
    <property type="evidence" value="ECO:0007669"/>
    <property type="project" value="UniProtKB-UniRule"/>
</dbReference>
<dbReference type="GO" id="GO:0003735">
    <property type="term" value="F:structural constituent of ribosome"/>
    <property type="evidence" value="ECO:0007669"/>
    <property type="project" value="UniProtKB-UniRule"/>
</dbReference>
<dbReference type="GO" id="GO:0000028">
    <property type="term" value="P:ribosomal small subunit assembly"/>
    <property type="evidence" value="ECO:0007669"/>
    <property type="project" value="UniProtKB-UniRule"/>
</dbReference>
<dbReference type="GO" id="GO:0006412">
    <property type="term" value="P:translation"/>
    <property type="evidence" value="ECO:0007669"/>
    <property type="project" value="UniProtKB-UniRule"/>
</dbReference>
<dbReference type="CDD" id="cd01425">
    <property type="entry name" value="RPS2"/>
    <property type="match status" value="1"/>
</dbReference>
<dbReference type="FunFam" id="3.40.50.10490:FF:000010">
    <property type="entry name" value="40S ribosomal protein S0"/>
    <property type="match status" value="1"/>
</dbReference>
<dbReference type="Gene3D" id="3.40.50.10490">
    <property type="entry name" value="Glucose-6-phosphate isomerase like protein, domain 1"/>
    <property type="match status" value="1"/>
</dbReference>
<dbReference type="HAMAP" id="MF_03015">
    <property type="entry name" value="Ribosomal_S2_euk"/>
    <property type="match status" value="1"/>
</dbReference>
<dbReference type="InterPro" id="IPR001865">
    <property type="entry name" value="Ribosomal_uS2"/>
</dbReference>
<dbReference type="InterPro" id="IPR032281">
    <property type="entry name" value="Ribosomal_uS2_C"/>
</dbReference>
<dbReference type="InterPro" id="IPR018130">
    <property type="entry name" value="Ribosomal_uS2_CS"/>
</dbReference>
<dbReference type="InterPro" id="IPR027498">
    <property type="entry name" value="Ribosomal_uS2_euk"/>
</dbReference>
<dbReference type="InterPro" id="IPR005707">
    <property type="entry name" value="Ribosomal_uS2_euk/arc"/>
</dbReference>
<dbReference type="InterPro" id="IPR023591">
    <property type="entry name" value="Ribosomal_uS2_flav_dom_sf"/>
</dbReference>
<dbReference type="NCBIfam" id="TIGR01012">
    <property type="entry name" value="uS2_euk_arch"/>
    <property type="match status" value="1"/>
</dbReference>
<dbReference type="PANTHER" id="PTHR11489">
    <property type="entry name" value="40S RIBOSOMAL PROTEIN SA"/>
    <property type="match status" value="1"/>
</dbReference>
<dbReference type="Pfam" id="PF16122">
    <property type="entry name" value="40S_SA_C"/>
    <property type="match status" value="1"/>
</dbReference>
<dbReference type="Pfam" id="PF00318">
    <property type="entry name" value="Ribosomal_S2"/>
    <property type="match status" value="2"/>
</dbReference>
<dbReference type="PRINTS" id="PR00395">
    <property type="entry name" value="RIBOSOMALS2"/>
</dbReference>
<dbReference type="SUPFAM" id="SSF52313">
    <property type="entry name" value="Ribosomal protein S2"/>
    <property type="match status" value="1"/>
</dbReference>
<dbReference type="PROSITE" id="PS00963">
    <property type="entry name" value="RIBOSOMAL_S2_2"/>
    <property type="match status" value="1"/>
</dbReference>
<gene>
    <name evidence="1" type="primary">RPS0</name>
    <name type="ORF">CIMG_03501</name>
</gene>
<organism>
    <name type="scientific">Coccidioides immitis (strain RS)</name>
    <name type="common">Valley fever fungus</name>
    <dbReference type="NCBI Taxonomy" id="246410"/>
    <lineage>
        <taxon>Eukaryota</taxon>
        <taxon>Fungi</taxon>
        <taxon>Dikarya</taxon>
        <taxon>Ascomycota</taxon>
        <taxon>Pezizomycotina</taxon>
        <taxon>Eurotiomycetes</taxon>
        <taxon>Eurotiomycetidae</taxon>
        <taxon>Onygenales</taxon>
        <taxon>Onygenaceae</taxon>
        <taxon>Coccidioides</taxon>
    </lineage>
</organism>
<comment type="function">
    <text evidence="1">Required for the assembly and/or stability of the 40S ribosomal subunit. Required for the processing of the 20S rRNA-precursor to mature 18S rRNA in a late step of the maturation of 40S ribosomal subunits.</text>
</comment>
<comment type="subunit">
    <text evidence="1">Component of the small ribosomal subunit. Mature ribosomes consist of a small (40S) and a large (60S) subunit. The 40S subunit contains about 33 different proteins and 1 molecule of RNA (18S). The 60S subunit contains about 49 different proteins and 3 molecules of RNA (25S, 5.8S and 5S). Interacts with RPS21.</text>
</comment>
<comment type="subcellular location">
    <subcellularLocation>
        <location evidence="1">Cytoplasm</location>
    </subcellularLocation>
</comment>
<comment type="similarity">
    <text evidence="1">Belongs to the universal ribosomal protein uS2 family.</text>
</comment>
<feature type="chain" id="PRO_0000371628" description="Small ribosomal subunit protein uS2">
    <location>
        <begin position="1"/>
        <end position="291"/>
    </location>
</feature>
<feature type="region of interest" description="Disordered" evidence="2">
    <location>
        <begin position="256"/>
        <end position="291"/>
    </location>
</feature>
<reference key="1">
    <citation type="journal article" date="2009" name="Genome Res.">
        <title>Comparative genomic analyses of the human fungal pathogens Coccidioides and their relatives.</title>
        <authorList>
            <person name="Sharpton T.J."/>
            <person name="Stajich J.E."/>
            <person name="Rounsley S.D."/>
            <person name="Gardner M.J."/>
            <person name="Wortman J.R."/>
            <person name="Jordar V.S."/>
            <person name="Maiti R."/>
            <person name="Kodira C.D."/>
            <person name="Neafsey D.E."/>
            <person name="Zeng Q."/>
            <person name="Hung C.-Y."/>
            <person name="McMahan C."/>
            <person name="Muszewska A."/>
            <person name="Grynberg M."/>
            <person name="Mandel M.A."/>
            <person name="Kellner E.M."/>
            <person name="Barker B.M."/>
            <person name="Galgiani J.N."/>
            <person name="Orbach M.J."/>
            <person name="Kirkland T.N."/>
            <person name="Cole G.T."/>
            <person name="Henn M.R."/>
            <person name="Birren B.W."/>
            <person name="Taylor J.W."/>
        </authorList>
    </citation>
    <scope>NUCLEOTIDE SEQUENCE [LARGE SCALE GENOMIC DNA]</scope>
    <source>
        <strain>RS</strain>
    </source>
</reference>
<reference key="2">
    <citation type="journal article" date="2010" name="Genome Res.">
        <title>Population genomic sequencing of Coccidioides fungi reveals recent hybridization and transposon control.</title>
        <authorList>
            <person name="Neafsey D.E."/>
            <person name="Barker B.M."/>
            <person name="Sharpton T.J."/>
            <person name="Stajich J.E."/>
            <person name="Park D.J."/>
            <person name="Whiston E."/>
            <person name="Hung C.-Y."/>
            <person name="McMahan C."/>
            <person name="White J."/>
            <person name="Sykes S."/>
            <person name="Heiman D."/>
            <person name="Young S."/>
            <person name="Zeng Q."/>
            <person name="Abouelleil A."/>
            <person name="Aftuck L."/>
            <person name="Bessette D."/>
            <person name="Brown A."/>
            <person name="FitzGerald M."/>
            <person name="Lui A."/>
            <person name="Macdonald J.P."/>
            <person name="Priest M."/>
            <person name="Orbach M.J."/>
            <person name="Galgiani J.N."/>
            <person name="Kirkland T.N."/>
            <person name="Cole G.T."/>
            <person name="Birren B.W."/>
            <person name="Henn M.R."/>
            <person name="Taylor J.W."/>
            <person name="Rounsley S.D."/>
        </authorList>
    </citation>
    <scope>GENOME REANNOTATION</scope>
    <source>
        <strain>RS</strain>
    </source>
</reference>